<proteinExistence type="inferred from homology"/>
<evidence type="ECO:0000250" key="1"/>
<evidence type="ECO:0000255" key="2">
    <source>
        <dbReference type="PROSITE-ProRule" id="PRU00539"/>
    </source>
</evidence>
<evidence type="ECO:0000256" key="3">
    <source>
        <dbReference type="SAM" id="MobiDB-lite"/>
    </source>
</evidence>
<evidence type="ECO:0000305" key="4"/>
<feature type="chain" id="PRO_0000083280" description="RNA-directed RNA polymerase 2a">
    <location>
        <begin position="1"/>
        <end position="839"/>
    </location>
</feature>
<feature type="domain" description="RdRp catalytic" evidence="2">
    <location>
        <begin position="508"/>
        <end position="621"/>
    </location>
</feature>
<feature type="region of interest" description="Disordered" evidence="3">
    <location>
        <begin position="773"/>
        <end position="824"/>
    </location>
</feature>
<accession>P06012</accession>
<organism>
    <name type="scientific">Cucumber mosaic virus (strain Q)</name>
    <name type="common">CMV</name>
    <dbReference type="NCBI Taxonomy" id="12310"/>
    <lineage>
        <taxon>Viruses</taxon>
        <taxon>Riboviria</taxon>
        <taxon>Orthornavirae</taxon>
        <taxon>Kitrinoviricota</taxon>
        <taxon>Alsuviricetes</taxon>
        <taxon>Martellivirales</taxon>
        <taxon>Bromoviridae</taxon>
        <taxon>Cucumovirus</taxon>
        <taxon>Cucumber mosaic virus</taxon>
    </lineage>
</organism>
<sequence>MISPPPTFSFANLLNGSYGVDTPEEVERVRREQREDAEAALRNYKPLPAVDVSESVPRDEPIVSQTVTAAPVTSVDDAFVSFGAEDYLEMSPSELLSAFELMVKPLRVGEVLCSSFDRSLFISSVAMARTLLLAPLTSTRTLKRFEDLVAAIYLKTDFFLEDDGPQTDVSQSDVPGYIFEPGQHSSGFEPPPICAKCDLILYQCPCFDFNALRESCAEKTFSHDYVIEGLDGVIDNATLLSNLGPFLLPVHCSYSKTEDPDFVVDPSLARPTDRVDVHVVQAVCDTTLPTHGNYDDSFHQVFVDSADYSTDMDHVRLRQSDLVAKIPDGGHMLPVLNTGSGHQRVGTTKEVLTAIKKRNADVPELGDSVNLSRLSKAVAERFRLSYMNVDALAKSNFVNVVSNFHAYMQKWPSSGLSYDDLPDLHAENLQFYDHMIKSDVKPVVTDTLNVDRPVPATITFHKKTITSQFSPLFISLFERFQRCLRERVVLPVGKISSLEMTGFSVLNKHCLEIDLSKFDKSQGEFHLMIQEHILNDLGCPAPITKWWCDFHRFSYIKDKRAGVGMPISFQRRTGDAFTYFGNTIVTMAEFAWCYDTDQFDRLLFSGDDSLAFSKLPPVGDPSKFTTLFNMEAKVMEPAVPYICSKFYSLMSLVTRFQSPTIREIQRLGTKKIPYSDNNDFLFAHFMSFVDRLKFMDRMSQSCIDQLSIFFELKYKKSGNEAALVLGAFKKYTANFNAYKELYYSDRQQCDLVNTFCISEFRVIRRTTVKKKKNGCVDSSGVDRRPPLSQFAGGETSKTKVSRQKPASEGLQKSQRESAIYSETFPDVTIPRSRSRGLVS</sequence>
<name>RDRP_CMVQ</name>
<reference key="1">
    <citation type="journal article" date="1984" name="Eur. J. Biochem.">
        <title>Nucleotide sequence of cucumber mosaic virus RNA 2 reveals a translation product significantly homologous to corresponding proteins of other viruses.</title>
        <authorList>
            <person name="Rezaian M.A."/>
            <person name="Williams R.H.V."/>
            <person name="Gordon K.H.J."/>
            <person name="Gould A.R."/>
            <person name="Symons R.H."/>
        </authorList>
    </citation>
    <scope>NUCLEOTIDE SEQUENCE [GENOMIC RNA]</scope>
</reference>
<protein>
    <recommendedName>
        <fullName>RNA-directed RNA polymerase 2a</fullName>
        <shortName>protein 2a</shortName>
        <ecNumber>2.7.7.48</ecNumber>
    </recommendedName>
</protein>
<keyword id="KW-0547">Nucleotide-binding</keyword>
<keyword id="KW-0548">Nucleotidyltransferase</keyword>
<keyword id="KW-0696">RNA-directed RNA polymerase</keyword>
<keyword id="KW-0808">Transferase</keyword>
<keyword id="KW-0693">Viral RNA replication</keyword>
<gene>
    <name type="ORF">ORF2a</name>
</gene>
<organismHost>
    <name type="scientific">Cucumis sativus</name>
    <name type="common">Cucumber</name>
    <dbReference type="NCBI Taxonomy" id="3659"/>
</organismHost>
<organismHost>
    <name type="scientific">Nicotiana tabacum</name>
    <name type="common">Common tobacco</name>
    <dbReference type="NCBI Taxonomy" id="4097"/>
</organismHost>
<organismHost>
    <name type="scientific">Solanum lycopersicum</name>
    <name type="common">Tomato</name>
    <name type="synonym">Lycopersicon esculentum</name>
    <dbReference type="NCBI Taxonomy" id="4081"/>
</organismHost>
<comment type="function">
    <text evidence="4">RNA-dependent RNA polymerase which replicates the viral genome composed of 3 RNA segments, RNA1, RNA2 and RNA3.</text>
</comment>
<comment type="catalytic activity">
    <reaction evidence="2">
        <text>RNA(n) + a ribonucleoside 5'-triphosphate = RNA(n+1) + diphosphate</text>
        <dbReference type="Rhea" id="RHEA:21248"/>
        <dbReference type="Rhea" id="RHEA-COMP:14527"/>
        <dbReference type="Rhea" id="RHEA-COMP:17342"/>
        <dbReference type="ChEBI" id="CHEBI:33019"/>
        <dbReference type="ChEBI" id="CHEBI:61557"/>
        <dbReference type="ChEBI" id="CHEBI:140395"/>
        <dbReference type="EC" id="2.7.7.48"/>
    </reaction>
</comment>
<comment type="subunit">
    <text evidence="1">Interacts with replication protein 1a.</text>
</comment>
<comment type="similarity">
    <text evidence="4">Belongs to the ssRNA positive-strand viruses RNA-directed RNA polymerase family.</text>
</comment>
<dbReference type="EC" id="2.7.7.48"/>
<dbReference type="EMBL" id="X00985">
    <property type="protein sequence ID" value="CAA25494.1"/>
    <property type="molecule type" value="Genomic_RNA"/>
</dbReference>
<dbReference type="PIR" id="S07226">
    <property type="entry name" value="S07226"/>
</dbReference>
<dbReference type="Proteomes" id="UP000008454">
    <property type="component" value="Genome"/>
</dbReference>
<dbReference type="GO" id="GO:0000166">
    <property type="term" value="F:nucleotide binding"/>
    <property type="evidence" value="ECO:0007669"/>
    <property type="project" value="UniProtKB-KW"/>
</dbReference>
<dbReference type="GO" id="GO:0003723">
    <property type="term" value="F:RNA binding"/>
    <property type="evidence" value="ECO:0007669"/>
    <property type="project" value="InterPro"/>
</dbReference>
<dbReference type="GO" id="GO:0003968">
    <property type="term" value="F:RNA-directed RNA polymerase activity"/>
    <property type="evidence" value="ECO:0007669"/>
    <property type="project" value="UniProtKB-KW"/>
</dbReference>
<dbReference type="GO" id="GO:0006351">
    <property type="term" value="P:DNA-templated transcription"/>
    <property type="evidence" value="ECO:0007669"/>
    <property type="project" value="InterPro"/>
</dbReference>
<dbReference type="GO" id="GO:0039690">
    <property type="term" value="P:positive stranded viral RNA replication"/>
    <property type="evidence" value="ECO:0007669"/>
    <property type="project" value="InterPro"/>
</dbReference>
<dbReference type="CDD" id="cd23252">
    <property type="entry name" value="Bromoviridae_RdRp"/>
    <property type="match status" value="1"/>
</dbReference>
<dbReference type="InterPro" id="IPR047309">
    <property type="entry name" value="Bromoviridae_RdRp"/>
</dbReference>
<dbReference type="InterPro" id="IPR043502">
    <property type="entry name" value="DNA/RNA_pol_sf"/>
</dbReference>
<dbReference type="InterPro" id="IPR001788">
    <property type="entry name" value="RNA-dep_RNA_pol_alsuvir"/>
</dbReference>
<dbReference type="InterPro" id="IPR007094">
    <property type="entry name" value="RNA-dir_pol_PSvirus"/>
</dbReference>
<dbReference type="Pfam" id="PF00978">
    <property type="entry name" value="RdRP_2"/>
    <property type="match status" value="1"/>
</dbReference>
<dbReference type="SUPFAM" id="SSF56672">
    <property type="entry name" value="DNA/RNA polymerases"/>
    <property type="match status" value="1"/>
</dbReference>
<dbReference type="PROSITE" id="PS50507">
    <property type="entry name" value="RDRP_SSRNA_POS"/>
    <property type="match status" value="1"/>
</dbReference>